<sequence>MKVTFEQLKAAFNRVLISRGVDSETADACAEMFARTTESGVYSHGVNRFPRFIQQLENGDIIPDAQPKRITSLGAIEQWDAQRSIGNLTAKKMMDRAIELAADHGIGLVALRNANHWMRGGSYGWQAAEKGYIGICWTNSIAVMPPWGAKECRIGTNPLIVAIPSTPITMVDMSMSMFSYGMLEVNRLAGRQLPVDGGFDDEGNLTKEPGVIEKNRRILPMGYWKGSGMSIVLDMIATLLSDGASVAEVTQDNSDEYGISQIFIAIEVDKLIDGPTRDAKLQRIMDYVTSAERADENQAIRLPGHEFTTLLAENRRNGITVDDSVWAKIQAL</sequence>
<feature type="chain" id="PRO_1000134340" description="2,3-diketo-L-gulonate reductase">
    <location>
        <begin position="1"/>
        <end position="332"/>
    </location>
</feature>
<feature type="active site" description="Proton donor" evidence="1">
    <location>
        <position position="44"/>
    </location>
</feature>
<feature type="binding site" evidence="1">
    <location>
        <begin position="168"/>
        <end position="174"/>
    </location>
    <ligand>
        <name>NAD(+)</name>
        <dbReference type="ChEBI" id="CHEBI:57540"/>
    </ligand>
</feature>
<feature type="binding site" evidence="1">
    <location>
        <begin position="224"/>
        <end position="225"/>
    </location>
    <ligand>
        <name>NAD(+)</name>
        <dbReference type="ChEBI" id="CHEBI:57540"/>
    </ligand>
</feature>
<feature type="binding site" evidence="1">
    <location>
        <begin position="304"/>
        <end position="306"/>
    </location>
    <ligand>
        <name>NAD(+)</name>
        <dbReference type="ChEBI" id="CHEBI:57540"/>
    </ligand>
</feature>
<organism>
    <name type="scientific">Escherichia coli (strain K12 / DH10B)</name>
    <dbReference type="NCBI Taxonomy" id="316385"/>
    <lineage>
        <taxon>Bacteria</taxon>
        <taxon>Pseudomonadati</taxon>
        <taxon>Pseudomonadota</taxon>
        <taxon>Gammaproteobacteria</taxon>
        <taxon>Enterobacterales</taxon>
        <taxon>Enterobacteriaceae</taxon>
        <taxon>Escherichia</taxon>
    </lineage>
</organism>
<evidence type="ECO:0000255" key="1">
    <source>
        <dbReference type="HAMAP-Rule" id="MF_00820"/>
    </source>
</evidence>
<accession>B1X8J1</accession>
<proteinExistence type="inferred from homology"/>
<gene>
    <name evidence="1" type="primary">dlgD</name>
    <name type="ordered locus">ECDH10B_3756</name>
</gene>
<dbReference type="EC" id="1.1.1.130" evidence="1"/>
<dbReference type="EMBL" id="CP000948">
    <property type="protein sequence ID" value="ACB04626.1"/>
    <property type="molecule type" value="Genomic_DNA"/>
</dbReference>
<dbReference type="SMR" id="B1X8J1"/>
<dbReference type="KEGG" id="ecd:ECDH10B_3756"/>
<dbReference type="HOGENOM" id="CLU_040452_4_0_6"/>
<dbReference type="GO" id="GO:0005737">
    <property type="term" value="C:cytoplasm"/>
    <property type="evidence" value="ECO:0007669"/>
    <property type="project" value="UniProtKB-SubCell"/>
</dbReference>
<dbReference type="GO" id="GO:0047559">
    <property type="term" value="F:3-dehydro-L-gulonate 2-dehydrogenase activity"/>
    <property type="evidence" value="ECO:0007669"/>
    <property type="project" value="UniProtKB-UniRule"/>
</dbReference>
<dbReference type="GO" id="GO:0070403">
    <property type="term" value="F:NAD+ binding"/>
    <property type="evidence" value="ECO:0007669"/>
    <property type="project" value="InterPro"/>
</dbReference>
<dbReference type="FunFam" id="1.10.1530.10:FF:000001">
    <property type="entry name" value="2,3-diketo-L-gulonate reductase"/>
    <property type="match status" value="1"/>
</dbReference>
<dbReference type="Gene3D" id="1.10.1530.10">
    <property type="match status" value="1"/>
</dbReference>
<dbReference type="Gene3D" id="3.30.1370.60">
    <property type="entry name" value="Hypothetical oxidoreductase yiak, domain 2"/>
    <property type="match status" value="1"/>
</dbReference>
<dbReference type="Gene3D" id="3.30.60.50">
    <property type="entry name" value="Hypothetical oxidoreductase yiak, domain 3"/>
    <property type="match status" value="1"/>
</dbReference>
<dbReference type="HAMAP" id="MF_00820">
    <property type="entry name" value="Diketo_gul_reduc"/>
    <property type="match status" value="1"/>
</dbReference>
<dbReference type="InterPro" id="IPR023689">
    <property type="entry name" value="Diketo_gul_Rdtase"/>
</dbReference>
<dbReference type="InterPro" id="IPR043144">
    <property type="entry name" value="Mal/L-sulf/L-lact_DH-like_ah"/>
</dbReference>
<dbReference type="InterPro" id="IPR043143">
    <property type="entry name" value="Mal/L-sulf/L-lact_DH-like_NADP"/>
</dbReference>
<dbReference type="InterPro" id="IPR036111">
    <property type="entry name" value="Mal/L-sulfo/L-lacto_DH-like_sf"/>
</dbReference>
<dbReference type="InterPro" id="IPR003767">
    <property type="entry name" value="Malate/L-lactate_DH-like"/>
</dbReference>
<dbReference type="NCBIfam" id="NF009750">
    <property type="entry name" value="PRK13260.1"/>
    <property type="match status" value="1"/>
</dbReference>
<dbReference type="PANTHER" id="PTHR11091:SF3">
    <property type="entry name" value="2,3-DIKETO-L-GULONATE REDUCTASE"/>
    <property type="match status" value="1"/>
</dbReference>
<dbReference type="PANTHER" id="PTHR11091">
    <property type="entry name" value="OXIDOREDUCTASE-RELATED"/>
    <property type="match status" value="1"/>
</dbReference>
<dbReference type="Pfam" id="PF02615">
    <property type="entry name" value="Ldh_2"/>
    <property type="match status" value="1"/>
</dbReference>
<dbReference type="SUPFAM" id="SSF89733">
    <property type="entry name" value="L-sulfolactate dehydrogenase-like"/>
    <property type="match status" value="1"/>
</dbReference>
<keyword id="KW-0963">Cytoplasm</keyword>
<keyword id="KW-0520">NAD</keyword>
<keyword id="KW-0560">Oxidoreductase</keyword>
<reference key="1">
    <citation type="journal article" date="2008" name="J. Bacteriol.">
        <title>The complete genome sequence of Escherichia coli DH10B: insights into the biology of a laboratory workhorse.</title>
        <authorList>
            <person name="Durfee T."/>
            <person name="Nelson R."/>
            <person name="Baldwin S."/>
            <person name="Plunkett G. III"/>
            <person name="Burland V."/>
            <person name="Mau B."/>
            <person name="Petrosino J.F."/>
            <person name="Qin X."/>
            <person name="Muzny D.M."/>
            <person name="Ayele M."/>
            <person name="Gibbs R.A."/>
            <person name="Csorgo B."/>
            <person name="Posfai G."/>
            <person name="Weinstock G.M."/>
            <person name="Blattner F.R."/>
        </authorList>
    </citation>
    <scope>NUCLEOTIDE SEQUENCE [LARGE SCALE GENOMIC DNA]</scope>
    <source>
        <strain>K12 / DH10B</strain>
    </source>
</reference>
<protein>
    <recommendedName>
        <fullName evidence="1">2,3-diketo-L-gulonate reductase</fullName>
        <shortName evidence="1">2,3-DKG reductase</shortName>
        <ecNumber evidence="1">1.1.1.130</ecNumber>
    </recommendedName>
    <alternativeName>
        <fullName evidence="1">3-dehydro-L-gulonate 2-dehydrogenase</fullName>
    </alternativeName>
</protein>
<name>DLGD_ECODH</name>
<comment type="function">
    <text evidence="1">Catalyzes the reduction of 2,3-diketo-L-gulonate in the presence of NADH, to form 3-keto-L-gulonate.</text>
</comment>
<comment type="catalytic activity">
    <reaction evidence="1">
        <text>3-dehydro-L-gulonate + NAD(+) = 2,3-dioxo-L-gulonate + NADH + H(+)</text>
        <dbReference type="Rhea" id="RHEA:21924"/>
        <dbReference type="ChEBI" id="CHEBI:15378"/>
        <dbReference type="ChEBI" id="CHEBI:57441"/>
        <dbReference type="ChEBI" id="CHEBI:57540"/>
        <dbReference type="ChEBI" id="CHEBI:57655"/>
        <dbReference type="ChEBI" id="CHEBI:57945"/>
        <dbReference type="EC" id="1.1.1.130"/>
    </reaction>
</comment>
<comment type="catalytic activity">
    <reaction evidence="1">
        <text>3-dehydro-L-gulonate + NADP(+) = 2,3-dioxo-L-gulonate + NADPH + H(+)</text>
        <dbReference type="Rhea" id="RHEA:21928"/>
        <dbReference type="ChEBI" id="CHEBI:15378"/>
        <dbReference type="ChEBI" id="CHEBI:57441"/>
        <dbReference type="ChEBI" id="CHEBI:57655"/>
        <dbReference type="ChEBI" id="CHEBI:57783"/>
        <dbReference type="ChEBI" id="CHEBI:58349"/>
        <dbReference type="EC" id="1.1.1.130"/>
    </reaction>
</comment>
<comment type="subunit">
    <text evidence="1">Homodimer.</text>
</comment>
<comment type="subcellular location">
    <subcellularLocation>
        <location evidence="1">Cytoplasm</location>
    </subcellularLocation>
</comment>
<comment type="similarity">
    <text evidence="1">Belongs to the LDH2/MDH2 oxidoreductase family. DlgD subfamily.</text>
</comment>